<protein>
    <recommendedName>
        <fullName>Transcriptional activator FeaR</fullName>
    </recommendedName>
</protein>
<evidence type="ECO:0000255" key="1">
    <source>
        <dbReference type="PROSITE-ProRule" id="PRU00593"/>
    </source>
</evidence>
<keyword id="KW-0010">Activator</keyword>
<keyword id="KW-0903">Direct protein sequencing</keyword>
<keyword id="KW-0238">DNA-binding</keyword>
<keyword id="KW-1185">Reference proteome</keyword>
<keyword id="KW-0804">Transcription</keyword>
<keyword id="KW-0805">Transcription regulation</keyword>
<comment type="function">
    <text>Positive regulator of tynA/maoA and feaB/padA, the genes for 2-phenylethylamine catabolism.</text>
</comment>
<reference key="1">
    <citation type="journal article" date="1996" name="J. Bacteriol.">
        <title>maoB, a gene that encodes a positive regulator of the monoamine oxidase gene (maoA) in Escherichia coli.</title>
        <authorList>
            <person name="Yamashita M."/>
            <person name="Azakami H."/>
            <person name="Yokoro N."/>
            <person name="Roh J.-H."/>
            <person name="Suzuki H."/>
            <person name="Kumagai H."/>
            <person name="Murooka Y."/>
        </authorList>
    </citation>
    <scope>NUCLEOTIDE SEQUENCE [GENOMIC DNA]</scope>
    <scope>PROTEIN SEQUENCE OF 1-6</scope>
</reference>
<reference key="2">
    <citation type="journal article" date="1997" name="Microbiology">
        <title>2-phenylethylamine catabolism by Escherichia coli K-12: gene organization and expression.</title>
        <authorList>
            <person name="Hanlon S.P."/>
            <person name="Hill T.K."/>
            <person name="Flavell M.A."/>
            <person name="Stringfellow J.M."/>
            <person name="Cooper R.A."/>
        </authorList>
    </citation>
    <scope>NUCLEOTIDE SEQUENCE [GENOMIC DNA]</scope>
    <source>
        <strain>K12</strain>
    </source>
</reference>
<reference key="3">
    <citation type="journal article" date="1997" name="Science">
        <title>The complete genome sequence of Escherichia coli K-12.</title>
        <authorList>
            <person name="Blattner F.R."/>
            <person name="Plunkett G. III"/>
            <person name="Bloch C.A."/>
            <person name="Perna N.T."/>
            <person name="Burland V."/>
            <person name="Riley M."/>
            <person name="Collado-Vides J."/>
            <person name="Glasner J.D."/>
            <person name="Rode C.K."/>
            <person name="Mayhew G.F."/>
            <person name="Gregor J."/>
            <person name="Davis N.W."/>
            <person name="Kirkpatrick H.A."/>
            <person name="Goeden M.A."/>
            <person name="Rose D.J."/>
            <person name="Mau B."/>
            <person name="Shao Y."/>
        </authorList>
    </citation>
    <scope>NUCLEOTIDE SEQUENCE [LARGE SCALE GENOMIC DNA]</scope>
    <source>
        <strain>K12 / MG1655 / ATCC 47076</strain>
    </source>
</reference>
<reference key="4">
    <citation type="journal article" date="2006" name="Mol. Syst. Biol.">
        <title>Highly accurate genome sequences of Escherichia coli K-12 strains MG1655 and W3110.</title>
        <authorList>
            <person name="Hayashi K."/>
            <person name="Morooka N."/>
            <person name="Yamamoto Y."/>
            <person name="Fujita K."/>
            <person name="Isono K."/>
            <person name="Choi S."/>
            <person name="Ohtsubo E."/>
            <person name="Baba T."/>
            <person name="Wanner B.L."/>
            <person name="Mori H."/>
            <person name="Horiuchi T."/>
        </authorList>
    </citation>
    <scope>NUCLEOTIDE SEQUENCE [LARGE SCALE GENOMIC DNA]</scope>
    <source>
        <strain>K12 / W3110 / ATCC 27325 / DSM 5911</strain>
    </source>
</reference>
<reference key="5">
    <citation type="journal article" date="1997" name="FEBS Lett.">
        <title>Molecular characterization of PadA, a phenylacetaldehyde dehydrogenase from Escherichia coli.</title>
        <authorList>
            <person name="Ferrandez A."/>
            <person name="Prieto M.A."/>
            <person name="Garcia J.L."/>
            <person name="Diaz E."/>
        </authorList>
    </citation>
    <scope>NUCLEOTIDE SEQUENCE [GENOMIC DNA] OF 1-104</scope>
    <source>
        <strain>W / ATCC 11105 / DSM 1900</strain>
    </source>
</reference>
<feature type="chain" id="PRO_0000194513" description="Transcriptional activator FeaR">
    <location>
        <begin position="1"/>
        <end position="301"/>
    </location>
</feature>
<feature type="domain" description="HTH araC/xylS-type" evidence="1">
    <location>
        <begin position="199"/>
        <end position="299"/>
    </location>
</feature>
<feature type="DNA-binding region" description="H-T-H motif" evidence="1">
    <location>
        <begin position="217"/>
        <end position="238"/>
    </location>
</feature>
<feature type="DNA-binding region" description="H-T-H motif" evidence="1">
    <location>
        <begin position="266"/>
        <end position="289"/>
    </location>
</feature>
<name>FEAR_ECOLI</name>
<accession>Q47129</accession>
<accession>Q2MBD4</accession>
<proteinExistence type="evidence at protein level"/>
<gene>
    <name type="primary">feaR</name>
    <name type="synonym">maoB</name>
    <name type="synonym">maoR</name>
    <name type="synonym">ydbM</name>
    <name type="ordered locus">b1384</name>
    <name type="ordered locus">JW1379</name>
</gene>
<sequence length="301" mass="34620">MNPAVDNEFQQWLSQINQVCGNFTGRLLTERYTGVLDTHFAKGLKLSTVTTSGVNLSRTWQEVKGSDDAWFYTVFQLSGQAIMEQDERQVQIGAGDITLLDASRPCSLYWQESSKQISLLLPRTLLEQYFPHQKPICAERLDADLPMVQLSHRLLQESMNNPALSETESEAALQAMVCLLRPVLHQRESVQPRRERQFQKVVTLIDDNIREEILRPEWIAGETGMSVRSLYRMFADKGLVVAQYIRNRRLDFCADAIRHAADDEKLAGIGFHWGFSDQSHFSTVFKQRFGMTPGEYRRKFR</sequence>
<dbReference type="EMBL" id="D67041">
    <property type="protein sequence ID" value="BAA11058.1"/>
    <property type="molecule type" value="Genomic_DNA"/>
</dbReference>
<dbReference type="EMBL" id="X99402">
    <property type="protein sequence ID" value="CAA67779.1"/>
    <property type="molecule type" value="Genomic_DNA"/>
</dbReference>
<dbReference type="EMBL" id="U00096">
    <property type="protein sequence ID" value="AAC74466.1"/>
    <property type="molecule type" value="Genomic_DNA"/>
</dbReference>
<dbReference type="EMBL" id="AP009048">
    <property type="protein sequence ID" value="BAE76422.1"/>
    <property type="molecule type" value="Genomic_DNA"/>
</dbReference>
<dbReference type="EMBL" id="X97453">
    <property type="protein sequence ID" value="CAA66105.1"/>
    <property type="molecule type" value="Genomic_DNA"/>
</dbReference>
<dbReference type="PIR" id="C64889">
    <property type="entry name" value="C64889"/>
</dbReference>
<dbReference type="RefSeq" id="NP_415902.1">
    <property type="nucleotide sequence ID" value="NC_000913.3"/>
</dbReference>
<dbReference type="RefSeq" id="WP_001067514.1">
    <property type="nucleotide sequence ID" value="NZ_LN832404.1"/>
</dbReference>
<dbReference type="SMR" id="Q47129"/>
<dbReference type="BioGRID" id="4262991">
    <property type="interactions" value="134"/>
</dbReference>
<dbReference type="FunCoup" id="Q47129">
    <property type="interactions" value="50"/>
</dbReference>
<dbReference type="IntAct" id="Q47129">
    <property type="interactions" value="3"/>
</dbReference>
<dbReference type="STRING" id="511145.b1384"/>
<dbReference type="PaxDb" id="511145-b1384"/>
<dbReference type="EnsemblBacteria" id="AAC74466">
    <property type="protein sequence ID" value="AAC74466"/>
    <property type="gene ID" value="b1384"/>
</dbReference>
<dbReference type="GeneID" id="945941"/>
<dbReference type="KEGG" id="ecj:JW1379"/>
<dbReference type="KEGG" id="eco:b1384"/>
<dbReference type="KEGG" id="ecoc:C3026_08085"/>
<dbReference type="PATRIC" id="fig|1411691.4.peg.888"/>
<dbReference type="EchoBASE" id="EB3198"/>
<dbReference type="eggNOG" id="COG2207">
    <property type="taxonomic scope" value="Bacteria"/>
</dbReference>
<dbReference type="HOGENOM" id="CLU_049704_3_1_6"/>
<dbReference type="InParanoid" id="Q47129"/>
<dbReference type="OMA" id="FKSEAHF"/>
<dbReference type="OrthoDB" id="5740883at2"/>
<dbReference type="PhylomeDB" id="Q47129"/>
<dbReference type="BioCyc" id="EcoCyc:G6706-MONOMER"/>
<dbReference type="PRO" id="PR:Q47129"/>
<dbReference type="Proteomes" id="UP000000625">
    <property type="component" value="Chromosome"/>
</dbReference>
<dbReference type="GO" id="GO:0000987">
    <property type="term" value="F:cis-regulatory region sequence-specific DNA binding"/>
    <property type="evidence" value="ECO:0000314"/>
    <property type="project" value="EcoCyc"/>
</dbReference>
<dbReference type="GO" id="GO:0003700">
    <property type="term" value="F:DNA-binding transcription factor activity"/>
    <property type="evidence" value="ECO:0000314"/>
    <property type="project" value="EcoCyc"/>
</dbReference>
<dbReference type="GO" id="GO:0045893">
    <property type="term" value="P:positive regulation of DNA-templated transcription"/>
    <property type="evidence" value="ECO:0000314"/>
    <property type="project" value="EcoCyc"/>
</dbReference>
<dbReference type="GO" id="GO:0006355">
    <property type="term" value="P:regulation of DNA-templated transcription"/>
    <property type="evidence" value="ECO:0000318"/>
    <property type="project" value="GO_Central"/>
</dbReference>
<dbReference type="FunFam" id="1.10.10.60:FF:000864">
    <property type="match status" value="1"/>
</dbReference>
<dbReference type="Gene3D" id="1.10.10.60">
    <property type="entry name" value="Homeodomain-like"/>
    <property type="match status" value="1"/>
</dbReference>
<dbReference type="InterPro" id="IPR035418">
    <property type="entry name" value="AraC-bd_2"/>
</dbReference>
<dbReference type="InterPro" id="IPR050204">
    <property type="entry name" value="AraC_XylS_family_regulators"/>
</dbReference>
<dbReference type="InterPro" id="IPR009057">
    <property type="entry name" value="Homeodomain-like_sf"/>
</dbReference>
<dbReference type="InterPro" id="IPR037923">
    <property type="entry name" value="HTH-like"/>
</dbReference>
<dbReference type="InterPro" id="IPR018060">
    <property type="entry name" value="HTH_AraC"/>
</dbReference>
<dbReference type="InterPro" id="IPR020449">
    <property type="entry name" value="Tscrpt_reg_AraC-type_HTH"/>
</dbReference>
<dbReference type="NCBIfam" id="NF007243">
    <property type="entry name" value="PRK09685.1"/>
    <property type="match status" value="1"/>
</dbReference>
<dbReference type="PANTHER" id="PTHR46796">
    <property type="entry name" value="HTH-TYPE TRANSCRIPTIONAL ACTIVATOR RHAS-RELATED"/>
    <property type="match status" value="1"/>
</dbReference>
<dbReference type="PANTHER" id="PTHR46796:SF10">
    <property type="entry name" value="TRANSCRIPTIONAL ACTIVATOR FEAR"/>
    <property type="match status" value="1"/>
</dbReference>
<dbReference type="Pfam" id="PF14525">
    <property type="entry name" value="AraC_binding_2"/>
    <property type="match status" value="1"/>
</dbReference>
<dbReference type="Pfam" id="PF12833">
    <property type="entry name" value="HTH_18"/>
    <property type="match status" value="1"/>
</dbReference>
<dbReference type="PRINTS" id="PR00032">
    <property type="entry name" value="HTHARAC"/>
</dbReference>
<dbReference type="SMART" id="SM00342">
    <property type="entry name" value="HTH_ARAC"/>
    <property type="match status" value="1"/>
</dbReference>
<dbReference type="SUPFAM" id="SSF46689">
    <property type="entry name" value="Homeodomain-like"/>
    <property type="match status" value="1"/>
</dbReference>
<dbReference type="SUPFAM" id="SSF51215">
    <property type="entry name" value="Regulatory protein AraC"/>
    <property type="match status" value="1"/>
</dbReference>
<dbReference type="PROSITE" id="PS01124">
    <property type="entry name" value="HTH_ARAC_FAMILY_2"/>
    <property type="match status" value="1"/>
</dbReference>
<organism>
    <name type="scientific">Escherichia coli (strain K12)</name>
    <dbReference type="NCBI Taxonomy" id="83333"/>
    <lineage>
        <taxon>Bacteria</taxon>
        <taxon>Pseudomonadati</taxon>
        <taxon>Pseudomonadota</taxon>
        <taxon>Gammaproteobacteria</taxon>
        <taxon>Enterobacterales</taxon>
        <taxon>Enterobacteriaceae</taxon>
        <taxon>Escherichia</taxon>
    </lineage>
</organism>